<keyword id="KW-0238">DNA-binding</keyword>
<keyword id="KW-0678">Repressor</keyword>
<keyword id="KW-0804">Transcription</keyword>
<keyword id="KW-0805">Transcription regulation</keyword>
<protein>
    <recommendedName>
        <fullName evidence="2">HTH-type transcriptional regulator BetI</fullName>
    </recommendedName>
</protein>
<feature type="chain" id="PRO_0000257741" description="HTH-type transcriptional regulator BetI">
    <location>
        <begin position="1"/>
        <end position="197"/>
    </location>
</feature>
<feature type="domain" description="HTH tetR-type" evidence="2">
    <location>
        <begin position="8"/>
        <end position="68"/>
    </location>
</feature>
<feature type="DNA-binding region" description="H-T-H motif" evidence="2">
    <location>
        <begin position="31"/>
        <end position="50"/>
    </location>
</feature>
<gene>
    <name evidence="2" type="primary">betI</name>
    <name type="ordered locus">Psyr_4734</name>
</gene>
<evidence type="ECO:0000250" key="1"/>
<evidence type="ECO:0000255" key="2">
    <source>
        <dbReference type="HAMAP-Rule" id="MF_00768"/>
    </source>
</evidence>
<reference key="1">
    <citation type="journal article" date="2005" name="Proc. Natl. Acad. Sci. U.S.A.">
        <title>Comparison of the complete genome sequences of Pseudomonas syringae pv. syringae B728a and pv. tomato DC3000.</title>
        <authorList>
            <person name="Feil H."/>
            <person name="Feil W.S."/>
            <person name="Chain P."/>
            <person name="Larimer F."/>
            <person name="Dibartolo G."/>
            <person name="Copeland A."/>
            <person name="Lykidis A."/>
            <person name="Trong S."/>
            <person name="Nolan M."/>
            <person name="Goltsman E."/>
            <person name="Thiel J."/>
            <person name="Malfatti S."/>
            <person name="Loper J.E."/>
            <person name="Lapidus A."/>
            <person name="Detter J.C."/>
            <person name="Land M."/>
            <person name="Richardson P.M."/>
            <person name="Kyrpides N.C."/>
            <person name="Ivanova N."/>
            <person name="Lindow S.E."/>
        </authorList>
    </citation>
    <scope>NUCLEOTIDE SEQUENCE [LARGE SCALE GENOMIC DNA]</scope>
    <source>
        <strain>B728a</strain>
    </source>
</reference>
<accession>Q4ZM61</accession>
<sequence>MPKVGMQPIRRQQLIQATLTAVDQVGMGDASIALIARLAGVSNGIISHYFQDKNGLIAATMRHLMNALIQNVRERRQALTEDSPRAHLQVIIEGNFDASQVSGPAMKTWLAFWATSMHHPSLHRLQRINDHRLYSNLCCQFRRTLPLEQARSAARGLAALIDGLWLRGALSGDAFDTEQAQRIAYEYMDFQLAKSAS</sequence>
<comment type="function">
    <text evidence="1">Repressor involved in the biosynthesis of the osmoprotectant glycine betaine. It represses transcription of the choline transporter BetT and the genes of BetAB involved in the synthesis of glycine betaine (By similarity).</text>
</comment>
<comment type="pathway">
    <text>Amine and polyamine biosynthesis; betaine biosynthesis via choline pathway [regulation].</text>
</comment>
<organism>
    <name type="scientific">Pseudomonas syringae pv. syringae (strain B728a)</name>
    <dbReference type="NCBI Taxonomy" id="205918"/>
    <lineage>
        <taxon>Bacteria</taxon>
        <taxon>Pseudomonadati</taxon>
        <taxon>Pseudomonadota</taxon>
        <taxon>Gammaproteobacteria</taxon>
        <taxon>Pseudomonadales</taxon>
        <taxon>Pseudomonadaceae</taxon>
        <taxon>Pseudomonas</taxon>
        <taxon>Pseudomonas syringae</taxon>
    </lineage>
</organism>
<proteinExistence type="inferred from homology"/>
<name>BETI_PSEU2</name>
<dbReference type="EMBL" id="CP000075">
    <property type="protein sequence ID" value="AAY39761.1"/>
    <property type="molecule type" value="Genomic_DNA"/>
</dbReference>
<dbReference type="RefSeq" id="WP_002555619.1">
    <property type="nucleotide sequence ID" value="NC_007005.1"/>
</dbReference>
<dbReference type="RefSeq" id="YP_237799.1">
    <property type="nucleotide sequence ID" value="NC_007005.1"/>
</dbReference>
<dbReference type="SMR" id="Q4ZM61"/>
<dbReference type="STRING" id="205918.Psyr_4734"/>
<dbReference type="GeneID" id="65077265"/>
<dbReference type="KEGG" id="psb:Psyr_4734"/>
<dbReference type="PATRIC" id="fig|205918.7.peg.4882"/>
<dbReference type="eggNOG" id="COG1309">
    <property type="taxonomic scope" value="Bacteria"/>
</dbReference>
<dbReference type="HOGENOM" id="CLU_069356_15_4_6"/>
<dbReference type="OrthoDB" id="7618612at2"/>
<dbReference type="UniPathway" id="UPA00529"/>
<dbReference type="Proteomes" id="UP000000426">
    <property type="component" value="Chromosome"/>
</dbReference>
<dbReference type="GO" id="GO:0003700">
    <property type="term" value="F:DNA-binding transcription factor activity"/>
    <property type="evidence" value="ECO:0007669"/>
    <property type="project" value="UniProtKB-UniRule"/>
</dbReference>
<dbReference type="GO" id="GO:0000976">
    <property type="term" value="F:transcription cis-regulatory region binding"/>
    <property type="evidence" value="ECO:0007669"/>
    <property type="project" value="TreeGrafter"/>
</dbReference>
<dbReference type="GO" id="GO:0019285">
    <property type="term" value="P:glycine betaine biosynthetic process from choline"/>
    <property type="evidence" value="ECO:0007669"/>
    <property type="project" value="UniProtKB-UniRule"/>
</dbReference>
<dbReference type="GO" id="GO:0045892">
    <property type="term" value="P:negative regulation of DNA-templated transcription"/>
    <property type="evidence" value="ECO:0007669"/>
    <property type="project" value="UniProtKB-UniRule"/>
</dbReference>
<dbReference type="Gene3D" id="1.10.357.10">
    <property type="entry name" value="Tetracycline Repressor, domain 2"/>
    <property type="match status" value="1"/>
</dbReference>
<dbReference type="HAMAP" id="MF_00768">
    <property type="entry name" value="HTH_type_BetI"/>
    <property type="match status" value="1"/>
</dbReference>
<dbReference type="InterPro" id="IPR039538">
    <property type="entry name" value="BetI_C"/>
</dbReference>
<dbReference type="InterPro" id="IPR023772">
    <property type="entry name" value="DNA-bd_HTH_TetR-type_CS"/>
</dbReference>
<dbReference type="InterPro" id="IPR009057">
    <property type="entry name" value="Homeodomain-like_sf"/>
</dbReference>
<dbReference type="InterPro" id="IPR050109">
    <property type="entry name" value="HTH-type_TetR-like_transc_reg"/>
</dbReference>
<dbReference type="InterPro" id="IPR001647">
    <property type="entry name" value="HTH_TetR"/>
</dbReference>
<dbReference type="InterPro" id="IPR036271">
    <property type="entry name" value="Tet_transcr_reg_TetR-rel_C_sf"/>
</dbReference>
<dbReference type="InterPro" id="IPR017757">
    <property type="entry name" value="Tscrpt_rep_BetI"/>
</dbReference>
<dbReference type="NCBIfam" id="TIGR03384">
    <property type="entry name" value="betaine_BetI"/>
    <property type="match status" value="1"/>
</dbReference>
<dbReference type="NCBIfam" id="NF001978">
    <property type="entry name" value="PRK00767.1"/>
    <property type="match status" value="1"/>
</dbReference>
<dbReference type="PANTHER" id="PTHR30055:SF234">
    <property type="entry name" value="HTH-TYPE TRANSCRIPTIONAL REGULATOR BETI"/>
    <property type="match status" value="1"/>
</dbReference>
<dbReference type="PANTHER" id="PTHR30055">
    <property type="entry name" value="HTH-TYPE TRANSCRIPTIONAL REGULATOR RUTR"/>
    <property type="match status" value="1"/>
</dbReference>
<dbReference type="Pfam" id="PF13977">
    <property type="entry name" value="TetR_C_6"/>
    <property type="match status" value="1"/>
</dbReference>
<dbReference type="Pfam" id="PF00440">
    <property type="entry name" value="TetR_N"/>
    <property type="match status" value="1"/>
</dbReference>
<dbReference type="SUPFAM" id="SSF46689">
    <property type="entry name" value="Homeodomain-like"/>
    <property type="match status" value="1"/>
</dbReference>
<dbReference type="SUPFAM" id="SSF48498">
    <property type="entry name" value="Tetracyclin repressor-like, C-terminal domain"/>
    <property type="match status" value="1"/>
</dbReference>
<dbReference type="PROSITE" id="PS01081">
    <property type="entry name" value="HTH_TETR_1"/>
    <property type="match status" value="1"/>
</dbReference>
<dbReference type="PROSITE" id="PS50977">
    <property type="entry name" value="HTH_TETR_2"/>
    <property type="match status" value="1"/>
</dbReference>